<comment type="function">
    <text evidence="1">Succinyl-CoA synthetase functions in the citric acid cycle (TCA), coupling the hydrolysis of succinyl-CoA to the synthesis of either ATP or GTP and thus represents the only step of substrate-level phosphorylation in the TCA. The beta subunit provides nucleotide specificity of the enzyme and binds the substrate succinate, while the binding sites for coenzyme A and phosphate are found in the alpha subunit.</text>
</comment>
<comment type="catalytic activity">
    <reaction evidence="1">
        <text>succinate + ATP + CoA = succinyl-CoA + ADP + phosphate</text>
        <dbReference type="Rhea" id="RHEA:17661"/>
        <dbReference type="ChEBI" id="CHEBI:30031"/>
        <dbReference type="ChEBI" id="CHEBI:30616"/>
        <dbReference type="ChEBI" id="CHEBI:43474"/>
        <dbReference type="ChEBI" id="CHEBI:57287"/>
        <dbReference type="ChEBI" id="CHEBI:57292"/>
        <dbReference type="ChEBI" id="CHEBI:456216"/>
        <dbReference type="EC" id="6.2.1.5"/>
    </reaction>
    <physiologicalReaction direction="right-to-left" evidence="1">
        <dbReference type="Rhea" id="RHEA:17663"/>
    </physiologicalReaction>
</comment>
<comment type="catalytic activity">
    <reaction evidence="1">
        <text>GTP + succinate + CoA = succinyl-CoA + GDP + phosphate</text>
        <dbReference type="Rhea" id="RHEA:22120"/>
        <dbReference type="ChEBI" id="CHEBI:30031"/>
        <dbReference type="ChEBI" id="CHEBI:37565"/>
        <dbReference type="ChEBI" id="CHEBI:43474"/>
        <dbReference type="ChEBI" id="CHEBI:57287"/>
        <dbReference type="ChEBI" id="CHEBI:57292"/>
        <dbReference type="ChEBI" id="CHEBI:58189"/>
    </reaction>
    <physiologicalReaction direction="right-to-left" evidence="1">
        <dbReference type="Rhea" id="RHEA:22122"/>
    </physiologicalReaction>
</comment>
<comment type="cofactor">
    <cofactor evidence="1">
        <name>Mg(2+)</name>
        <dbReference type="ChEBI" id="CHEBI:18420"/>
    </cofactor>
    <text evidence="1">Binds 1 Mg(2+) ion per subunit.</text>
</comment>
<comment type="pathway">
    <text evidence="1">Carbohydrate metabolism; tricarboxylic acid cycle; succinate from succinyl-CoA (ligase route): step 1/1.</text>
</comment>
<comment type="subunit">
    <text evidence="1">Heterotetramer of two alpha and two beta subunits.</text>
</comment>
<comment type="similarity">
    <text evidence="1">Belongs to the succinate/malate CoA ligase beta subunit family.</text>
</comment>
<organism>
    <name type="scientific">Brucella abortus biovar 1 (strain 9-941)</name>
    <dbReference type="NCBI Taxonomy" id="262698"/>
    <lineage>
        <taxon>Bacteria</taxon>
        <taxon>Pseudomonadati</taxon>
        <taxon>Pseudomonadota</taxon>
        <taxon>Alphaproteobacteria</taxon>
        <taxon>Hyphomicrobiales</taxon>
        <taxon>Brucellaceae</taxon>
        <taxon>Brucella/Ochrobactrum group</taxon>
        <taxon>Brucella</taxon>
    </lineage>
</organism>
<sequence length="398" mass="42527">MNIHEYQAKRLLHTYGAPIANGVAVYSVEQAEEWAKTLPGPLYVVKSQIHAGGRGKGKFKELPADAKGGVRLAKSVEEVVANAKEMLGNTLVTKQTGEAGKQVNRLYIEDGADIERELYLSILIDRSVGRPAFVVSTEGGMDIEAVAEETPEKIVTVAIDPAKGVTDEDANKLADALKLEGGAREDGLKLFPILYKAFTEKDMSLLEINPLIVMTNGRVRVLDAKVSFDNNALFRHPDIVELRDLTEEDPKEIEASKYDLAYVALDGNIGCMVNGAGLAMATMDIIKLYGAEPANFLDVGGGASKEKVTAAFKIITADPAVEGILVNIFGGIMKCDVIAEGVIAAVKEVGLKVPLVVRLEGTNVELGKKIINESGLNVISADDLDDAAQKIVAAVKGN</sequence>
<proteinExistence type="inferred from homology"/>
<evidence type="ECO:0000255" key="1">
    <source>
        <dbReference type="HAMAP-Rule" id="MF_00558"/>
    </source>
</evidence>
<feature type="chain" id="PRO_1000082031" description="Succinate--CoA ligase [ADP-forming] subunit beta">
    <location>
        <begin position="1"/>
        <end position="398"/>
    </location>
</feature>
<feature type="domain" description="ATP-grasp" evidence="1">
    <location>
        <begin position="9"/>
        <end position="254"/>
    </location>
</feature>
<feature type="binding site" evidence="1">
    <location>
        <position position="46"/>
    </location>
    <ligand>
        <name>ATP</name>
        <dbReference type="ChEBI" id="CHEBI:30616"/>
    </ligand>
</feature>
<feature type="binding site" evidence="1">
    <location>
        <begin position="53"/>
        <end position="55"/>
    </location>
    <ligand>
        <name>ATP</name>
        <dbReference type="ChEBI" id="CHEBI:30616"/>
    </ligand>
</feature>
<feature type="binding site" evidence="1">
    <location>
        <position position="109"/>
    </location>
    <ligand>
        <name>ATP</name>
        <dbReference type="ChEBI" id="CHEBI:30616"/>
    </ligand>
</feature>
<feature type="binding site" evidence="1">
    <location>
        <position position="112"/>
    </location>
    <ligand>
        <name>ATP</name>
        <dbReference type="ChEBI" id="CHEBI:30616"/>
    </ligand>
</feature>
<feature type="binding site" evidence="1">
    <location>
        <position position="117"/>
    </location>
    <ligand>
        <name>ATP</name>
        <dbReference type="ChEBI" id="CHEBI:30616"/>
    </ligand>
</feature>
<feature type="binding site" evidence="1">
    <location>
        <position position="209"/>
    </location>
    <ligand>
        <name>Mg(2+)</name>
        <dbReference type="ChEBI" id="CHEBI:18420"/>
    </ligand>
</feature>
<feature type="binding site" evidence="1">
    <location>
        <position position="223"/>
    </location>
    <ligand>
        <name>Mg(2+)</name>
        <dbReference type="ChEBI" id="CHEBI:18420"/>
    </ligand>
</feature>
<feature type="binding site" evidence="1">
    <location>
        <position position="274"/>
    </location>
    <ligand>
        <name>substrate</name>
        <note>ligand shared with subunit alpha</note>
    </ligand>
</feature>
<feature type="binding site" evidence="1">
    <location>
        <begin position="331"/>
        <end position="333"/>
    </location>
    <ligand>
        <name>substrate</name>
        <note>ligand shared with subunit alpha</note>
    </ligand>
</feature>
<protein>
    <recommendedName>
        <fullName evidence="1">Succinate--CoA ligase [ADP-forming] subunit beta</fullName>
        <ecNumber evidence="1">6.2.1.5</ecNumber>
    </recommendedName>
    <alternativeName>
        <fullName evidence="1">Succinyl-CoA synthetase subunit beta</fullName>
        <shortName evidence="1">SCS-beta</shortName>
    </alternativeName>
</protein>
<accession>Q57AX2</accession>
<gene>
    <name evidence="1" type="primary">sucC</name>
    <name type="ordered locus">BruAb1_1902</name>
</gene>
<dbReference type="EC" id="6.2.1.5" evidence="1"/>
<dbReference type="EMBL" id="AE017223">
    <property type="protein sequence ID" value="AAX75212.1"/>
    <property type="molecule type" value="Genomic_DNA"/>
</dbReference>
<dbReference type="RefSeq" id="WP_002964994.1">
    <property type="nucleotide sequence ID" value="NC_006932.1"/>
</dbReference>
<dbReference type="SMR" id="Q57AX2"/>
<dbReference type="EnsemblBacteria" id="AAX75212">
    <property type="protein sequence ID" value="AAX75212"/>
    <property type="gene ID" value="BruAb1_1902"/>
</dbReference>
<dbReference type="GeneID" id="97534788"/>
<dbReference type="KEGG" id="bmb:BruAb1_1902"/>
<dbReference type="HOGENOM" id="CLU_037430_0_2_5"/>
<dbReference type="UniPathway" id="UPA00223">
    <property type="reaction ID" value="UER00999"/>
</dbReference>
<dbReference type="Proteomes" id="UP000000540">
    <property type="component" value="Chromosome I"/>
</dbReference>
<dbReference type="GO" id="GO:0005829">
    <property type="term" value="C:cytosol"/>
    <property type="evidence" value="ECO:0007669"/>
    <property type="project" value="TreeGrafter"/>
</dbReference>
<dbReference type="GO" id="GO:0042709">
    <property type="term" value="C:succinate-CoA ligase complex"/>
    <property type="evidence" value="ECO:0007669"/>
    <property type="project" value="TreeGrafter"/>
</dbReference>
<dbReference type="GO" id="GO:0005524">
    <property type="term" value="F:ATP binding"/>
    <property type="evidence" value="ECO:0007669"/>
    <property type="project" value="UniProtKB-UniRule"/>
</dbReference>
<dbReference type="GO" id="GO:0000287">
    <property type="term" value="F:magnesium ion binding"/>
    <property type="evidence" value="ECO:0007669"/>
    <property type="project" value="UniProtKB-UniRule"/>
</dbReference>
<dbReference type="GO" id="GO:0004775">
    <property type="term" value="F:succinate-CoA ligase (ADP-forming) activity"/>
    <property type="evidence" value="ECO:0007669"/>
    <property type="project" value="UniProtKB-UniRule"/>
</dbReference>
<dbReference type="GO" id="GO:0004776">
    <property type="term" value="F:succinate-CoA ligase (GDP-forming) activity"/>
    <property type="evidence" value="ECO:0007669"/>
    <property type="project" value="RHEA"/>
</dbReference>
<dbReference type="GO" id="GO:0006104">
    <property type="term" value="P:succinyl-CoA metabolic process"/>
    <property type="evidence" value="ECO:0007669"/>
    <property type="project" value="TreeGrafter"/>
</dbReference>
<dbReference type="GO" id="GO:0006099">
    <property type="term" value="P:tricarboxylic acid cycle"/>
    <property type="evidence" value="ECO:0007669"/>
    <property type="project" value="UniProtKB-UniRule"/>
</dbReference>
<dbReference type="FunFam" id="3.30.1490.20:FF:000002">
    <property type="entry name" value="Succinate--CoA ligase [ADP-forming] subunit beta"/>
    <property type="match status" value="1"/>
</dbReference>
<dbReference type="FunFam" id="3.30.470.20:FF:000002">
    <property type="entry name" value="Succinate--CoA ligase [ADP-forming] subunit beta"/>
    <property type="match status" value="1"/>
</dbReference>
<dbReference type="FunFam" id="3.40.50.261:FF:000001">
    <property type="entry name" value="Succinate--CoA ligase [ADP-forming] subunit beta"/>
    <property type="match status" value="1"/>
</dbReference>
<dbReference type="Gene3D" id="3.30.1490.20">
    <property type="entry name" value="ATP-grasp fold, A domain"/>
    <property type="match status" value="1"/>
</dbReference>
<dbReference type="Gene3D" id="3.30.470.20">
    <property type="entry name" value="ATP-grasp fold, B domain"/>
    <property type="match status" value="1"/>
</dbReference>
<dbReference type="Gene3D" id="3.40.50.261">
    <property type="entry name" value="Succinyl-CoA synthetase domains"/>
    <property type="match status" value="1"/>
</dbReference>
<dbReference type="HAMAP" id="MF_00558">
    <property type="entry name" value="Succ_CoA_beta"/>
    <property type="match status" value="1"/>
</dbReference>
<dbReference type="InterPro" id="IPR011761">
    <property type="entry name" value="ATP-grasp"/>
</dbReference>
<dbReference type="InterPro" id="IPR013650">
    <property type="entry name" value="ATP-grasp_succ-CoA_synth-type"/>
</dbReference>
<dbReference type="InterPro" id="IPR013815">
    <property type="entry name" value="ATP_grasp_subdomain_1"/>
</dbReference>
<dbReference type="InterPro" id="IPR017866">
    <property type="entry name" value="Succ-CoA_synthase_bsu_CS"/>
</dbReference>
<dbReference type="InterPro" id="IPR005811">
    <property type="entry name" value="SUCC_ACL_C"/>
</dbReference>
<dbReference type="InterPro" id="IPR005809">
    <property type="entry name" value="Succ_CoA_ligase-like_bsu"/>
</dbReference>
<dbReference type="InterPro" id="IPR016102">
    <property type="entry name" value="Succinyl-CoA_synth-like"/>
</dbReference>
<dbReference type="NCBIfam" id="NF001913">
    <property type="entry name" value="PRK00696.1"/>
    <property type="match status" value="1"/>
</dbReference>
<dbReference type="NCBIfam" id="TIGR01016">
    <property type="entry name" value="sucCoAbeta"/>
    <property type="match status" value="1"/>
</dbReference>
<dbReference type="PANTHER" id="PTHR11815:SF10">
    <property type="entry name" value="SUCCINATE--COA LIGASE [GDP-FORMING] SUBUNIT BETA, MITOCHONDRIAL"/>
    <property type="match status" value="1"/>
</dbReference>
<dbReference type="PANTHER" id="PTHR11815">
    <property type="entry name" value="SUCCINYL-COA SYNTHETASE BETA CHAIN"/>
    <property type="match status" value="1"/>
</dbReference>
<dbReference type="Pfam" id="PF08442">
    <property type="entry name" value="ATP-grasp_2"/>
    <property type="match status" value="1"/>
</dbReference>
<dbReference type="Pfam" id="PF00549">
    <property type="entry name" value="Ligase_CoA"/>
    <property type="match status" value="1"/>
</dbReference>
<dbReference type="PIRSF" id="PIRSF001554">
    <property type="entry name" value="SucCS_beta"/>
    <property type="match status" value="1"/>
</dbReference>
<dbReference type="SUPFAM" id="SSF56059">
    <property type="entry name" value="Glutathione synthetase ATP-binding domain-like"/>
    <property type="match status" value="1"/>
</dbReference>
<dbReference type="SUPFAM" id="SSF52210">
    <property type="entry name" value="Succinyl-CoA synthetase domains"/>
    <property type="match status" value="1"/>
</dbReference>
<dbReference type="PROSITE" id="PS50975">
    <property type="entry name" value="ATP_GRASP"/>
    <property type="match status" value="1"/>
</dbReference>
<dbReference type="PROSITE" id="PS01217">
    <property type="entry name" value="SUCCINYL_COA_LIG_3"/>
    <property type="match status" value="1"/>
</dbReference>
<name>SUCC_BRUAB</name>
<keyword id="KW-0067">ATP-binding</keyword>
<keyword id="KW-0436">Ligase</keyword>
<keyword id="KW-0460">Magnesium</keyword>
<keyword id="KW-0479">Metal-binding</keyword>
<keyword id="KW-0547">Nucleotide-binding</keyword>
<keyword id="KW-0816">Tricarboxylic acid cycle</keyword>
<reference key="1">
    <citation type="journal article" date="2005" name="J. Bacteriol.">
        <title>Completion of the genome sequence of Brucella abortus and comparison to the highly similar genomes of Brucella melitensis and Brucella suis.</title>
        <authorList>
            <person name="Halling S.M."/>
            <person name="Peterson-Burch B.D."/>
            <person name="Bricker B.J."/>
            <person name="Zuerner R.L."/>
            <person name="Qing Z."/>
            <person name="Li L.-L."/>
            <person name="Kapur V."/>
            <person name="Alt D.P."/>
            <person name="Olsen S.C."/>
        </authorList>
    </citation>
    <scope>NUCLEOTIDE SEQUENCE [LARGE SCALE GENOMIC DNA]</scope>
    <source>
        <strain>9-941</strain>
    </source>
</reference>